<feature type="chain" id="PRO_1000212578" description="UPF0270 protein Avin_35000">
    <location>
        <begin position="1"/>
        <end position="75"/>
    </location>
</feature>
<dbReference type="EMBL" id="CP001157">
    <property type="protein sequence ID" value="ACO79649.1"/>
    <property type="molecule type" value="Genomic_DNA"/>
</dbReference>
<dbReference type="RefSeq" id="WP_012702029.1">
    <property type="nucleotide sequence ID" value="NC_012560.1"/>
</dbReference>
<dbReference type="SMR" id="C1DQL3"/>
<dbReference type="STRING" id="322710.Avin_35000"/>
<dbReference type="EnsemblBacteria" id="ACO79649">
    <property type="protein sequence ID" value="ACO79649"/>
    <property type="gene ID" value="Avin_35000"/>
</dbReference>
<dbReference type="GeneID" id="88186503"/>
<dbReference type="KEGG" id="avn:Avin_35000"/>
<dbReference type="eggNOG" id="COG3089">
    <property type="taxonomic scope" value="Bacteria"/>
</dbReference>
<dbReference type="HOGENOM" id="CLU_186759_2_0_6"/>
<dbReference type="OrthoDB" id="6120729at2"/>
<dbReference type="Proteomes" id="UP000002424">
    <property type="component" value="Chromosome"/>
</dbReference>
<dbReference type="Gene3D" id="1.10.10.610">
    <property type="entry name" value="YehU-like"/>
    <property type="match status" value="1"/>
</dbReference>
<dbReference type="HAMAP" id="MF_00690">
    <property type="entry name" value="UPF0270"/>
    <property type="match status" value="1"/>
</dbReference>
<dbReference type="InterPro" id="IPR010648">
    <property type="entry name" value="UPF0270"/>
</dbReference>
<dbReference type="InterPro" id="IPR036685">
    <property type="entry name" value="YehU-like_sf"/>
</dbReference>
<dbReference type="NCBIfam" id="NF001441">
    <property type="entry name" value="PRK00304.1"/>
    <property type="match status" value="1"/>
</dbReference>
<dbReference type="Pfam" id="PF06794">
    <property type="entry name" value="UPF0270"/>
    <property type="match status" value="1"/>
</dbReference>
<dbReference type="PIRSF" id="PIRSF006169">
    <property type="entry name" value="UCP006169"/>
    <property type="match status" value="1"/>
</dbReference>
<dbReference type="SUPFAM" id="SSF118001">
    <property type="entry name" value="YehU-like"/>
    <property type="match status" value="1"/>
</dbReference>
<evidence type="ECO:0000255" key="1">
    <source>
        <dbReference type="HAMAP-Rule" id="MF_00690"/>
    </source>
</evidence>
<organism>
    <name type="scientific">Azotobacter vinelandii (strain DJ / ATCC BAA-1303)</name>
    <dbReference type="NCBI Taxonomy" id="322710"/>
    <lineage>
        <taxon>Bacteria</taxon>
        <taxon>Pseudomonadati</taxon>
        <taxon>Pseudomonadota</taxon>
        <taxon>Gammaproteobacteria</taxon>
        <taxon>Pseudomonadales</taxon>
        <taxon>Pseudomonadaceae</taxon>
        <taxon>Azotobacter</taxon>
    </lineage>
</organism>
<gene>
    <name type="ordered locus">Avin_35000</name>
</gene>
<comment type="similarity">
    <text evidence="1">Belongs to the UPF0270 family.</text>
</comment>
<protein>
    <recommendedName>
        <fullName evidence="1">UPF0270 protein Avin_35000</fullName>
    </recommendedName>
</protein>
<reference key="1">
    <citation type="journal article" date="2009" name="J. Bacteriol.">
        <title>Genome sequence of Azotobacter vinelandii, an obligate aerobe specialized to support diverse anaerobic metabolic processes.</title>
        <authorList>
            <person name="Setubal J.C."/>
            <person name="Dos Santos P."/>
            <person name="Goldman B.S."/>
            <person name="Ertesvaag H."/>
            <person name="Espin G."/>
            <person name="Rubio L.M."/>
            <person name="Valla S."/>
            <person name="Almeida N.F."/>
            <person name="Balasubramanian D."/>
            <person name="Cromes L."/>
            <person name="Curatti L."/>
            <person name="Du Z."/>
            <person name="Godsy E."/>
            <person name="Goodner B."/>
            <person name="Hellner-Burris K."/>
            <person name="Hernandez J.A."/>
            <person name="Houmiel K."/>
            <person name="Imperial J."/>
            <person name="Kennedy C."/>
            <person name="Larson T.J."/>
            <person name="Latreille P."/>
            <person name="Ligon L.S."/>
            <person name="Lu J."/>
            <person name="Maerk M."/>
            <person name="Miller N.M."/>
            <person name="Norton S."/>
            <person name="O'Carroll I.P."/>
            <person name="Paulsen I."/>
            <person name="Raulfs E.C."/>
            <person name="Roemer R."/>
            <person name="Rosser J."/>
            <person name="Segura D."/>
            <person name="Slater S."/>
            <person name="Stricklin S.L."/>
            <person name="Studholme D.J."/>
            <person name="Sun J."/>
            <person name="Viana C.J."/>
            <person name="Wallin E."/>
            <person name="Wang B."/>
            <person name="Wheeler C."/>
            <person name="Zhu H."/>
            <person name="Dean D.R."/>
            <person name="Dixon R."/>
            <person name="Wood D."/>
        </authorList>
    </citation>
    <scope>NUCLEOTIDE SEQUENCE [LARGE SCALE GENOMIC DNA]</scope>
    <source>
        <strain>DJ / ATCC BAA-1303</strain>
    </source>
</reference>
<accession>C1DQL3</accession>
<proteinExistence type="inferred from homology"/>
<name>Y3500_AZOVD</name>
<sequence>MLIPHHLLEAETLTRLIEDFVTREGTDNGEETPLESRVLRVRQALERGEALILFEPDSQQCQLVAKRDVPKEWLD</sequence>